<feature type="signal peptide" evidence="2">
    <location>
        <begin position="1"/>
        <end position="22"/>
    </location>
</feature>
<feature type="peptide" id="PRO_0000398381" description="Meucin-24" evidence="9">
    <location>
        <begin position="23"/>
        <end position="46"/>
    </location>
</feature>
<feature type="chain" id="PRO_0000398382" description="Potassium channel toxin MeuTXKbeta3" evidence="9">
    <location>
        <begin position="42"/>
        <end position="88"/>
    </location>
</feature>
<feature type="domain" description="BetaSPN-type CS-alpha/beta" evidence="3">
    <location>
        <begin position="55"/>
        <end position="88"/>
    </location>
</feature>
<feature type="disulfide bond" evidence="3">
    <location>
        <begin position="58"/>
        <end position="78"/>
    </location>
</feature>
<feature type="disulfide bond" evidence="3">
    <location>
        <begin position="65"/>
        <end position="83"/>
    </location>
</feature>
<feature type="disulfide bond" evidence="3">
    <location>
        <begin position="69"/>
        <end position="85"/>
    </location>
</feature>
<organism>
    <name type="scientific">Mesobuthus eupeus</name>
    <name type="common">Lesser Asian scorpion</name>
    <name type="synonym">Buthus eupeus</name>
    <dbReference type="NCBI Taxonomy" id="34648"/>
    <lineage>
        <taxon>Eukaryota</taxon>
        <taxon>Metazoa</taxon>
        <taxon>Ecdysozoa</taxon>
        <taxon>Arthropoda</taxon>
        <taxon>Chelicerata</taxon>
        <taxon>Arachnida</taxon>
        <taxon>Scorpiones</taxon>
        <taxon>Buthida</taxon>
        <taxon>Buthoidea</taxon>
        <taxon>Buthidae</taxon>
        <taxon>Mesobuthus</taxon>
    </lineage>
</organism>
<comment type="function">
    <molecule>Potassium channel toxin MeuTXKbeta3</molecule>
    <text evidence="1">Inhibits voltage-gated potassium channels.</text>
</comment>
<comment type="function">
    <molecule>Meucin-24</molecule>
    <text evidence="4">The synthetic meucin-24 inhibits the development of P.berghei ookinetes, kills intraerythrocytic P.falciparum, and is cytotoxic to the Drosophila S2 cells at micromolar concentrations. No antibacterial, antifungal and hemolytic activities have been found at micromolar concentrations.</text>
</comment>
<comment type="subcellular location">
    <subcellularLocation>
        <location evidence="9">Secreted</location>
    </subcellularLocation>
</comment>
<comment type="tissue specificity">
    <text evidence="9">Expressed by the venom gland.</text>
</comment>
<comment type="miscellaneous">
    <text>The RNA coding for this protein is silently edited.</text>
</comment>
<comment type="miscellaneous">
    <text evidence="8">Meucin-24 belongs to the non-disulfide-bridged peptide (NDBP) superfamily. Antimalarial peptide (group 5) family.</text>
</comment>
<comment type="similarity">
    <text evidence="8">Belongs to the long chain scorpion toxin family. Class 2 subfamily.</text>
</comment>
<comment type="caution">
    <text evidence="8">It is uncertain whether Met-1 or Met-2 is the initiator.</text>
</comment>
<keyword id="KW-0002">3D-structure</keyword>
<keyword id="KW-1015">Disulfide bond</keyword>
<keyword id="KW-0872">Ion channel impairing toxin</keyword>
<keyword id="KW-0528">Neurotoxin</keyword>
<keyword id="KW-0632">Potassium channel impairing toxin</keyword>
<keyword id="KW-0691">RNA editing</keyword>
<keyword id="KW-0964">Secreted</keyword>
<keyword id="KW-0732">Signal</keyword>
<keyword id="KW-0800">Toxin</keyword>
<evidence type="ECO:0000250" key="1">
    <source>
        <dbReference type="UniProtKB" id="Q9NJC6"/>
    </source>
</evidence>
<evidence type="ECO:0000255" key="2"/>
<evidence type="ECO:0000255" key="3">
    <source>
        <dbReference type="PROSITE-ProRule" id="PRU01209"/>
    </source>
</evidence>
<evidence type="ECO:0000269" key="4">
    <source>
    </source>
</evidence>
<evidence type="ECO:0000303" key="5">
    <source>
    </source>
</evidence>
<evidence type="ECO:0000303" key="6">
    <source>
    </source>
</evidence>
<evidence type="ECO:0000303" key="7">
    <source>
    </source>
</evidence>
<evidence type="ECO:0000305" key="8"/>
<evidence type="ECO:0000305" key="9">
    <source>
    </source>
</evidence>
<accession>P0CH57</accession>
<accession>E4VNZ9</accession>
<dbReference type="EMBL" id="EF442047">
    <property type="protein sequence ID" value="ABR20112.1"/>
    <property type="molecule type" value="mRNA"/>
</dbReference>
<dbReference type="PDB" id="2KFE">
    <property type="method" value="NMR"/>
    <property type="chains" value="A=23-46"/>
</dbReference>
<dbReference type="PDBsum" id="2KFE"/>
<dbReference type="BMRB" id="P0CH57"/>
<dbReference type="SMR" id="P0CH57"/>
<dbReference type="GO" id="GO:0005576">
    <property type="term" value="C:extracellular region"/>
    <property type="evidence" value="ECO:0007669"/>
    <property type="project" value="UniProtKB-SubCell"/>
</dbReference>
<dbReference type="GO" id="GO:0015459">
    <property type="term" value="F:potassium channel regulator activity"/>
    <property type="evidence" value="ECO:0007669"/>
    <property type="project" value="UniProtKB-KW"/>
</dbReference>
<dbReference type="GO" id="GO:0090729">
    <property type="term" value="F:toxin activity"/>
    <property type="evidence" value="ECO:0007669"/>
    <property type="project" value="UniProtKB-KW"/>
</dbReference>
<dbReference type="InterPro" id="IPR029237">
    <property type="entry name" value="Long_scorpion_toxin_alpha/beta"/>
</dbReference>
<dbReference type="Pfam" id="PF14866">
    <property type="entry name" value="Scorpion_toxin_alpha-beta"/>
    <property type="match status" value="1"/>
</dbReference>
<dbReference type="PROSITE" id="PS51862">
    <property type="entry name" value="BSPN_CSAB"/>
    <property type="match status" value="1"/>
</dbReference>
<name>NDB51_MESEU</name>
<protein>
    <recommendedName>
        <fullName evidence="6">Potassium channel toxin MeuTXKbeta3-meucin-24</fullName>
    </recommendedName>
    <component>
        <recommendedName>
            <fullName evidence="5">Meucin-24</fullName>
        </recommendedName>
        <alternativeName>
            <fullName evidence="7">Non-disulfide-bridged peptide 5.1</fullName>
            <shortName evidence="7">NDBP-5.1</shortName>
        </alternativeName>
    </component>
    <component>
        <recommendedName>
            <fullName evidence="6">Potassium channel toxin MeuTXKbeta3</fullName>
        </recommendedName>
    </component>
</protein>
<proteinExistence type="evidence at protein level"/>
<sequence>MMKQQFFLFLAVIVMISSVIEAGRGREFMSNLKEKLSGVKEKMKNSWNRLTSMSEYACPVIEKWCEDHCQAKNAIGRCENTECKCLSK</sequence>
<reference key="1">
    <citation type="journal article" date="2010" name="Biochimie">
        <title>Characterization of two linear cationic antimalarial peptides in the scorpion Mesobuthus eupeus.</title>
        <authorList>
            <person name="Gao B."/>
            <person name="Xu J."/>
            <person name="Del Carmen Rodriguez M."/>
            <person name="Lanz-Mendoza H."/>
            <person name="Hernandez-Rivas R."/>
            <person name="Du W."/>
            <person name="Zhu S."/>
        </authorList>
    </citation>
    <scope>NUCLEOTIDE SEQUENCE [MRNA]</scope>
    <scope>SYNTHESIS OF 23-46</scope>
    <scope>FUNCTION OF MEUCIN-24</scope>
    <scope>STRUCTURE BY NMR OF 23-46</scope>
    <source>
        <tissue>Venom gland</tissue>
    </source>
</reference>
<reference key="2">
    <citation type="journal article" date="2011" name="Mol. Cell. Proteomics">
        <title>Molecular diversity and functional evolution of scorpion potassium channel toxins.</title>
        <authorList>
            <person name="Zhu S."/>
            <person name="Peigneur S."/>
            <person name="Gao B."/>
            <person name="Luo L."/>
            <person name="Jin D."/>
            <person name="Zhao Y."/>
            <person name="Tytgat J."/>
        </authorList>
    </citation>
    <scope>NUCLEOTIDE SEQUENCE [MRNA]</scope>
    <source>
        <tissue>Venom gland</tissue>
    </source>
</reference>
<reference key="3">
    <citation type="journal article" date="2014" name="Peptides">
        <title>Scorpion venom peptides with no disulfide bridges: a review.</title>
        <authorList>
            <person name="Almaaytah A."/>
            <person name="Albalas Q."/>
        </authorList>
    </citation>
    <scope>NOMENCLATURE OF MEUCIN-24</scope>
</reference>